<organism>
    <name type="scientific">Staphylococcus saprophyticus subsp. saprophyticus (strain ATCC 15305 / DSM 20229 / NCIMB 8711 / NCTC 7292 / S-41)</name>
    <dbReference type="NCBI Taxonomy" id="342451"/>
    <lineage>
        <taxon>Bacteria</taxon>
        <taxon>Bacillati</taxon>
        <taxon>Bacillota</taxon>
        <taxon>Bacilli</taxon>
        <taxon>Bacillales</taxon>
        <taxon>Staphylococcaceae</taxon>
        <taxon>Staphylococcus</taxon>
    </lineage>
</organism>
<reference key="1">
    <citation type="journal article" date="2005" name="Proc. Natl. Acad. Sci. U.S.A.">
        <title>Whole genome sequence of Staphylococcus saprophyticus reveals the pathogenesis of uncomplicated urinary tract infection.</title>
        <authorList>
            <person name="Kuroda M."/>
            <person name="Yamashita A."/>
            <person name="Hirakawa H."/>
            <person name="Kumano M."/>
            <person name="Morikawa K."/>
            <person name="Higashide M."/>
            <person name="Maruyama A."/>
            <person name="Inose Y."/>
            <person name="Matoba K."/>
            <person name="Toh H."/>
            <person name="Kuhara S."/>
            <person name="Hattori M."/>
            <person name="Ohta T."/>
        </authorList>
    </citation>
    <scope>NUCLEOTIDE SEQUENCE [LARGE SCALE GENOMIC DNA]</scope>
    <source>
        <strain>ATCC 15305 / DSM 20229 / NCIMB 8711 / NCTC 7292 / S-41</strain>
    </source>
</reference>
<protein>
    <recommendedName>
        <fullName evidence="1">Aspartate--tRNA ligase</fullName>
        <ecNumber evidence="1">6.1.1.12</ecNumber>
    </recommendedName>
    <alternativeName>
        <fullName evidence="1">Aspartyl-tRNA synthetase</fullName>
        <shortName evidence="1">AspRS</shortName>
    </alternativeName>
</protein>
<gene>
    <name evidence="1" type="primary">aspS</name>
    <name type="ordered locus">SSP1129</name>
</gene>
<dbReference type="EC" id="6.1.1.12" evidence="1"/>
<dbReference type="EMBL" id="AP008934">
    <property type="protein sequence ID" value="BAE18274.1"/>
    <property type="molecule type" value="Genomic_DNA"/>
</dbReference>
<dbReference type="RefSeq" id="WP_011302957.1">
    <property type="nucleotide sequence ID" value="NZ_MTGA01000038.1"/>
</dbReference>
<dbReference type="SMR" id="Q49Y68"/>
<dbReference type="GeneID" id="3617013"/>
<dbReference type="KEGG" id="ssp:SSP1129"/>
<dbReference type="PATRIC" id="fig|342451.11.peg.1129"/>
<dbReference type="eggNOG" id="COG0173">
    <property type="taxonomic scope" value="Bacteria"/>
</dbReference>
<dbReference type="HOGENOM" id="CLU_014330_3_2_9"/>
<dbReference type="OrthoDB" id="9802326at2"/>
<dbReference type="Proteomes" id="UP000006371">
    <property type="component" value="Chromosome"/>
</dbReference>
<dbReference type="GO" id="GO:0005737">
    <property type="term" value="C:cytoplasm"/>
    <property type="evidence" value="ECO:0007669"/>
    <property type="project" value="UniProtKB-SubCell"/>
</dbReference>
<dbReference type="GO" id="GO:0004815">
    <property type="term" value="F:aspartate-tRNA ligase activity"/>
    <property type="evidence" value="ECO:0007669"/>
    <property type="project" value="UniProtKB-UniRule"/>
</dbReference>
<dbReference type="GO" id="GO:0005524">
    <property type="term" value="F:ATP binding"/>
    <property type="evidence" value="ECO:0007669"/>
    <property type="project" value="UniProtKB-UniRule"/>
</dbReference>
<dbReference type="GO" id="GO:0140096">
    <property type="term" value="F:catalytic activity, acting on a protein"/>
    <property type="evidence" value="ECO:0007669"/>
    <property type="project" value="UniProtKB-ARBA"/>
</dbReference>
<dbReference type="GO" id="GO:0003676">
    <property type="term" value="F:nucleic acid binding"/>
    <property type="evidence" value="ECO:0007669"/>
    <property type="project" value="InterPro"/>
</dbReference>
<dbReference type="GO" id="GO:0016740">
    <property type="term" value="F:transferase activity"/>
    <property type="evidence" value="ECO:0007669"/>
    <property type="project" value="UniProtKB-ARBA"/>
</dbReference>
<dbReference type="GO" id="GO:0006422">
    <property type="term" value="P:aspartyl-tRNA aminoacylation"/>
    <property type="evidence" value="ECO:0007669"/>
    <property type="project" value="UniProtKB-UniRule"/>
</dbReference>
<dbReference type="CDD" id="cd00777">
    <property type="entry name" value="AspRS_core"/>
    <property type="match status" value="1"/>
</dbReference>
<dbReference type="CDD" id="cd04317">
    <property type="entry name" value="EcAspRS_like_N"/>
    <property type="match status" value="1"/>
</dbReference>
<dbReference type="Gene3D" id="3.30.930.10">
    <property type="entry name" value="Bira Bifunctional Protein, Domain 2"/>
    <property type="match status" value="1"/>
</dbReference>
<dbReference type="Gene3D" id="3.30.1360.30">
    <property type="entry name" value="GAD-like domain"/>
    <property type="match status" value="1"/>
</dbReference>
<dbReference type="Gene3D" id="2.40.50.140">
    <property type="entry name" value="Nucleic acid-binding proteins"/>
    <property type="match status" value="1"/>
</dbReference>
<dbReference type="HAMAP" id="MF_00044">
    <property type="entry name" value="Asp_tRNA_synth_type1"/>
    <property type="match status" value="1"/>
</dbReference>
<dbReference type="InterPro" id="IPR004364">
    <property type="entry name" value="Aa-tRNA-synt_II"/>
</dbReference>
<dbReference type="InterPro" id="IPR006195">
    <property type="entry name" value="aa-tRNA-synth_II"/>
</dbReference>
<dbReference type="InterPro" id="IPR045864">
    <property type="entry name" value="aa-tRNA-synth_II/BPL/LPL"/>
</dbReference>
<dbReference type="InterPro" id="IPR004524">
    <property type="entry name" value="Asp-tRNA-ligase_1"/>
</dbReference>
<dbReference type="InterPro" id="IPR047089">
    <property type="entry name" value="Asp-tRNA-ligase_1_N"/>
</dbReference>
<dbReference type="InterPro" id="IPR002312">
    <property type="entry name" value="Asp/Asn-tRNA-synth_IIb"/>
</dbReference>
<dbReference type="InterPro" id="IPR047090">
    <property type="entry name" value="AspRS_core"/>
</dbReference>
<dbReference type="InterPro" id="IPR004115">
    <property type="entry name" value="GAD-like_sf"/>
</dbReference>
<dbReference type="InterPro" id="IPR029351">
    <property type="entry name" value="GAD_dom"/>
</dbReference>
<dbReference type="InterPro" id="IPR012340">
    <property type="entry name" value="NA-bd_OB-fold"/>
</dbReference>
<dbReference type="InterPro" id="IPR004365">
    <property type="entry name" value="NA-bd_OB_tRNA"/>
</dbReference>
<dbReference type="NCBIfam" id="TIGR00459">
    <property type="entry name" value="aspS_bact"/>
    <property type="match status" value="1"/>
</dbReference>
<dbReference type="NCBIfam" id="NF001750">
    <property type="entry name" value="PRK00476.1"/>
    <property type="match status" value="1"/>
</dbReference>
<dbReference type="PANTHER" id="PTHR22594:SF5">
    <property type="entry name" value="ASPARTATE--TRNA LIGASE, MITOCHONDRIAL"/>
    <property type="match status" value="1"/>
</dbReference>
<dbReference type="PANTHER" id="PTHR22594">
    <property type="entry name" value="ASPARTYL/LYSYL-TRNA SYNTHETASE"/>
    <property type="match status" value="1"/>
</dbReference>
<dbReference type="Pfam" id="PF02938">
    <property type="entry name" value="GAD"/>
    <property type="match status" value="1"/>
</dbReference>
<dbReference type="Pfam" id="PF00152">
    <property type="entry name" value="tRNA-synt_2"/>
    <property type="match status" value="1"/>
</dbReference>
<dbReference type="Pfam" id="PF01336">
    <property type="entry name" value="tRNA_anti-codon"/>
    <property type="match status" value="1"/>
</dbReference>
<dbReference type="PRINTS" id="PR01042">
    <property type="entry name" value="TRNASYNTHASP"/>
</dbReference>
<dbReference type="SUPFAM" id="SSF55681">
    <property type="entry name" value="Class II aaRS and biotin synthetases"/>
    <property type="match status" value="1"/>
</dbReference>
<dbReference type="SUPFAM" id="SSF55261">
    <property type="entry name" value="GAD domain-like"/>
    <property type="match status" value="1"/>
</dbReference>
<dbReference type="SUPFAM" id="SSF50249">
    <property type="entry name" value="Nucleic acid-binding proteins"/>
    <property type="match status" value="1"/>
</dbReference>
<dbReference type="PROSITE" id="PS50862">
    <property type="entry name" value="AA_TRNA_LIGASE_II"/>
    <property type="match status" value="1"/>
</dbReference>
<comment type="function">
    <text evidence="1">Catalyzes the attachment of L-aspartate to tRNA(Asp) in a two-step reaction: L-aspartate is first activated by ATP to form Asp-AMP and then transferred to the acceptor end of tRNA(Asp).</text>
</comment>
<comment type="catalytic activity">
    <reaction evidence="1">
        <text>tRNA(Asp) + L-aspartate + ATP = L-aspartyl-tRNA(Asp) + AMP + diphosphate</text>
        <dbReference type="Rhea" id="RHEA:19649"/>
        <dbReference type="Rhea" id="RHEA-COMP:9660"/>
        <dbReference type="Rhea" id="RHEA-COMP:9678"/>
        <dbReference type="ChEBI" id="CHEBI:29991"/>
        <dbReference type="ChEBI" id="CHEBI:30616"/>
        <dbReference type="ChEBI" id="CHEBI:33019"/>
        <dbReference type="ChEBI" id="CHEBI:78442"/>
        <dbReference type="ChEBI" id="CHEBI:78516"/>
        <dbReference type="ChEBI" id="CHEBI:456215"/>
        <dbReference type="EC" id="6.1.1.12"/>
    </reaction>
</comment>
<comment type="subunit">
    <text evidence="1">Homodimer.</text>
</comment>
<comment type="subcellular location">
    <subcellularLocation>
        <location evidence="1">Cytoplasm</location>
    </subcellularLocation>
</comment>
<comment type="similarity">
    <text evidence="1">Belongs to the class-II aminoacyl-tRNA synthetase family. Type 1 subfamily.</text>
</comment>
<feature type="chain" id="PRO_0000235563" description="Aspartate--tRNA ligase">
    <location>
        <begin position="1"/>
        <end position="588"/>
    </location>
</feature>
<feature type="region of interest" description="Aspartate" evidence="1">
    <location>
        <begin position="201"/>
        <end position="204"/>
    </location>
</feature>
<feature type="binding site" evidence="1">
    <location>
        <position position="177"/>
    </location>
    <ligand>
        <name>L-aspartate</name>
        <dbReference type="ChEBI" id="CHEBI:29991"/>
    </ligand>
</feature>
<feature type="binding site" evidence="1">
    <location>
        <begin position="223"/>
        <end position="225"/>
    </location>
    <ligand>
        <name>ATP</name>
        <dbReference type="ChEBI" id="CHEBI:30616"/>
    </ligand>
</feature>
<feature type="binding site" evidence="1">
    <location>
        <position position="223"/>
    </location>
    <ligand>
        <name>L-aspartate</name>
        <dbReference type="ChEBI" id="CHEBI:29991"/>
    </ligand>
</feature>
<feature type="binding site" evidence="1">
    <location>
        <position position="232"/>
    </location>
    <ligand>
        <name>ATP</name>
        <dbReference type="ChEBI" id="CHEBI:30616"/>
    </ligand>
</feature>
<feature type="binding site" evidence="1">
    <location>
        <position position="451"/>
    </location>
    <ligand>
        <name>L-aspartate</name>
        <dbReference type="ChEBI" id="CHEBI:29991"/>
    </ligand>
</feature>
<feature type="binding site" evidence="1">
    <location>
        <position position="485"/>
    </location>
    <ligand>
        <name>ATP</name>
        <dbReference type="ChEBI" id="CHEBI:30616"/>
    </ligand>
</feature>
<feature type="binding site" evidence="1">
    <location>
        <position position="492"/>
    </location>
    <ligand>
        <name>L-aspartate</name>
        <dbReference type="ChEBI" id="CHEBI:29991"/>
    </ligand>
</feature>
<feature type="binding site" evidence="1">
    <location>
        <begin position="537"/>
        <end position="540"/>
    </location>
    <ligand>
        <name>ATP</name>
        <dbReference type="ChEBI" id="CHEBI:30616"/>
    </ligand>
</feature>
<keyword id="KW-0030">Aminoacyl-tRNA synthetase</keyword>
<keyword id="KW-0067">ATP-binding</keyword>
<keyword id="KW-0963">Cytoplasm</keyword>
<keyword id="KW-0436">Ligase</keyword>
<keyword id="KW-0547">Nucleotide-binding</keyword>
<keyword id="KW-0648">Protein biosynthesis</keyword>
<keyword id="KW-1185">Reference proteome</keyword>
<evidence type="ECO:0000255" key="1">
    <source>
        <dbReference type="HAMAP-Rule" id="MF_00044"/>
    </source>
</evidence>
<accession>Q49Y68</accession>
<proteinExistence type="inferred from homology"/>
<name>SYD_STAS1</name>
<sequence>MSKRTTYCGLVTESLLDQEVTLKGWVHNRRDLGGLIFVDLRDREGYVQIVFNPDFSEEALKTAETVRSEYVVEVKGLVKKRDPQTVNPKIATGQVEVQVSEINIINKSETPPFAINEENQNVDENIRLKYRYLDLRRQELAQTFKMRHQTTRSIRQYLDKEGFFDIETPVLTKSTPEGARDYLVPSRVHDGEFYALPQSPQIFKQLLMISGFDKYYQIVKCFRDEDLRADRQPEFTQVDIEMSFVDQEDVMDMGEEMLQNVVKDVKDVEIPRPFPRMTYNEAMERYGSDKPDTRFEMELINVSELGEEMDFKVFKDAVNNDGQVKAIVAKGAADQYTRKDIDALTEFVNIYGAKGLAWVKVVDDGLSGPIARFFETTHIEKLQSLTNAESGDLVLFVADKPNVVAQSLGALRLKLARELDLIDESKLNFLWVTDWPLLEYDEDLKRYTAAHHPFTAPKQEDIEKLDSEPENAQANAYDVVLNGYELGGGSIRIHNGELQAKMFEVLGFTEEQAQEQFGFLLDAFKYGAPPHGGIALGLDRLVMLLTGRTNLRDTIAFPKTASATCLLTDAPSEVSENQLEELSLRIRH</sequence>